<sequence>MRIVFAGTPEFAAEHLKALLDSPYEIVAVYTQPDRPAGRGQKLMPSAVKALAVAHDIPVFQPQTLRNADAQAELAALKPDLMVVVAYGLILPQVVLDIPRLGCINSHASLLPRWRGAAPIQRAVEAGDAESGVTVMRMEAGLDTGPMLLKVVTPISAEDTGGTLHDRLAEMGPPAVVQAIAGLADGSLQGEIQDDALATYAHKLNKDEARIDWTRPAVELERLIRAFNPWPVCHSMLDGESVKVLAANLSTGQGAPGEILSASKDGLVVACGDQALSLTRLQLPGGKALSFSDLFNSRREKFAAGKVLGQ</sequence>
<feature type="chain" id="PRO_1000020134" description="Methionyl-tRNA formyltransferase">
    <location>
        <begin position="1"/>
        <end position="310"/>
    </location>
</feature>
<feature type="binding site" evidence="1">
    <location>
        <begin position="109"/>
        <end position="112"/>
    </location>
    <ligand>
        <name>(6S)-5,6,7,8-tetrahydrofolate</name>
        <dbReference type="ChEBI" id="CHEBI:57453"/>
    </ligand>
</feature>
<keyword id="KW-0648">Protein biosynthesis</keyword>
<keyword id="KW-0808">Transferase</keyword>
<evidence type="ECO:0000255" key="1">
    <source>
        <dbReference type="HAMAP-Rule" id="MF_00182"/>
    </source>
</evidence>
<comment type="function">
    <text evidence="1">Attaches a formyl group to the free amino group of methionyl-tRNA(fMet). The formyl group appears to play a dual role in the initiator identity of N-formylmethionyl-tRNA by promoting its recognition by IF2 and preventing the misappropriation of this tRNA by the elongation apparatus.</text>
</comment>
<comment type="catalytic activity">
    <reaction evidence="1">
        <text>L-methionyl-tRNA(fMet) + (6R)-10-formyltetrahydrofolate = N-formyl-L-methionyl-tRNA(fMet) + (6S)-5,6,7,8-tetrahydrofolate + H(+)</text>
        <dbReference type="Rhea" id="RHEA:24380"/>
        <dbReference type="Rhea" id="RHEA-COMP:9952"/>
        <dbReference type="Rhea" id="RHEA-COMP:9953"/>
        <dbReference type="ChEBI" id="CHEBI:15378"/>
        <dbReference type="ChEBI" id="CHEBI:57453"/>
        <dbReference type="ChEBI" id="CHEBI:78530"/>
        <dbReference type="ChEBI" id="CHEBI:78844"/>
        <dbReference type="ChEBI" id="CHEBI:195366"/>
        <dbReference type="EC" id="2.1.2.9"/>
    </reaction>
</comment>
<comment type="similarity">
    <text evidence="1">Belongs to the Fmt family.</text>
</comment>
<accession>A5VWJ8</accession>
<gene>
    <name evidence="1" type="primary">fmt</name>
    <name type="ordered locus">Pput_0083</name>
</gene>
<protein>
    <recommendedName>
        <fullName evidence="1">Methionyl-tRNA formyltransferase</fullName>
        <ecNumber evidence="1">2.1.2.9</ecNumber>
    </recommendedName>
</protein>
<reference key="1">
    <citation type="submission" date="2007-05" db="EMBL/GenBank/DDBJ databases">
        <title>Complete sequence of Pseudomonas putida F1.</title>
        <authorList>
            <consortium name="US DOE Joint Genome Institute"/>
            <person name="Copeland A."/>
            <person name="Lucas S."/>
            <person name="Lapidus A."/>
            <person name="Barry K."/>
            <person name="Detter J.C."/>
            <person name="Glavina del Rio T."/>
            <person name="Hammon N."/>
            <person name="Israni S."/>
            <person name="Dalin E."/>
            <person name="Tice H."/>
            <person name="Pitluck S."/>
            <person name="Chain P."/>
            <person name="Malfatti S."/>
            <person name="Shin M."/>
            <person name="Vergez L."/>
            <person name="Schmutz J."/>
            <person name="Larimer F."/>
            <person name="Land M."/>
            <person name="Hauser L."/>
            <person name="Kyrpides N."/>
            <person name="Lykidis A."/>
            <person name="Parales R."/>
            <person name="Richardson P."/>
        </authorList>
    </citation>
    <scope>NUCLEOTIDE SEQUENCE [LARGE SCALE GENOMIC DNA]</scope>
    <source>
        <strain>ATCC 700007 / DSM 6899 / JCM 31910 / BCRC 17059 / LMG 24140 / F1</strain>
    </source>
</reference>
<name>FMT_PSEP1</name>
<organism>
    <name type="scientific">Pseudomonas putida (strain ATCC 700007 / DSM 6899 / JCM 31910 / BCRC 17059 / LMG 24140 / F1)</name>
    <dbReference type="NCBI Taxonomy" id="351746"/>
    <lineage>
        <taxon>Bacteria</taxon>
        <taxon>Pseudomonadati</taxon>
        <taxon>Pseudomonadota</taxon>
        <taxon>Gammaproteobacteria</taxon>
        <taxon>Pseudomonadales</taxon>
        <taxon>Pseudomonadaceae</taxon>
        <taxon>Pseudomonas</taxon>
    </lineage>
</organism>
<proteinExistence type="inferred from homology"/>
<dbReference type="EC" id="2.1.2.9" evidence="1"/>
<dbReference type="EMBL" id="CP000712">
    <property type="protein sequence ID" value="ABQ76258.1"/>
    <property type="molecule type" value="Genomic_DNA"/>
</dbReference>
<dbReference type="SMR" id="A5VWJ8"/>
<dbReference type="KEGG" id="ppf:Pput_0083"/>
<dbReference type="eggNOG" id="COG0223">
    <property type="taxonomic scope" value="Bacteria"/>
</dbReference>
<dbReference type="HOGENOM" id="CLU_033347_1_2_6"/>
<dbReference type="GO" id="GO:0005829">
    <property type="term" value="C:cytosol"/>
    <property type="evidence" value="ECO:0007669"/>
    <property type="project" value="TreeGrafter"/>
</dbReference>
<dbReference type="GO" id="GO:0004479">
    <property type="term" value="F:methionyl-tRNA formyltransferase activity"/>
    <property type="evidence" value="ECO:0007669"/>
    <property type="project" value="UniProtKB-UniRule"/>
</dbReference>
<dbReference type="CDD" id="cd08646">
    <property type="entry name" value="FMT_core_Met-tRNA-FMT_N"/>
    <property type="match status" value="1"/>
</dbReference>
<dbReference type="CDD" id="cd08704">
    <property type="entry name" value="Met_tRNA_FMT_C"/>
    <property type="match status" value="1"/>
</dbReference>
<dbReference type="FunFam" id="3.40.50.170:FF:000003">
    <property type="entry name" value="Methionyl-tRNA formyltransferase"/>
    <property type="match status" value="1"/>
</dbReference>
<dbReference type="Gene3D" id="3.10.25.10">
    <property type="entry name" value="Formyl transferase, C-terminal domain"/>
    <property type="match status" value="1"/>
</dbReference>
<dbReference type="Gene3D" id="3.40.50.170">
    <property type="entry name" value="Formyl transferase, N-terminal domain"/>
    <property type="match status" value="1"/>
</dbReference>
<dbReference type="HAMAP" id="MF_00182">
    <property type="entry name" value="Formyl_trans"/>
    <property type="match status" value="1"/>
</dbReference>
<dbReference type="InterPro" id="IPR005794">
    <property type="entry name" value="Fmt"/>
</dbReference>
<dbReference type="InterPro" id="IPR005793">
    <property type="entry name" value="Formyl_trans_C"/>
</dbReference>
<dbReference type="InterPro" id="IPR037022">
    <property type="entry name" value="Formyl_trans_C_sf"/>
</dbReference>
<dbReference type="InterPro" id="IPR002376">
    <property type="entry name" value="Formyl_transf_N"/>
</dbReference>
<dbReference type="InterPro" id="IPR036477">
    <property type="entry name" value="Formyl_transf_N_sf"/>
</dbReference>
<dbReference type="InterPro" id="IPR011034">
    <property type="entry name" value="Formyl_transferase-like_C_sf"/>
</dbReference>
<dbReference type="InterPro" id="IPR001555">
    <property type="entry name" value="GART_AS"/>
</dbReference>
<dbReference type="InterPro" id="IPR044135">
    <property type="entry name" value="Met-tRNA-FMT_C"/>
</dbReference>
<dbReference type="InterPro" id="IPR041711">
    <property type="entry name" value="Met-tRNA-FMT_N"/>
</dbReference>
<dbReference type="NCBIfam" id="TIGR00460">
    <property type="entry name" value="fmt"/>
    <property type="match status" value="1"/>
</dbReference>
<dbReference type="PANTHER" id="PTHR11138">
    <property type="entry name" value="METHIONYL-TRNA FORMYLTRANSFERASE"/>
    <property type="match status" value="1"/>
</dbReference>
<dbReference type="PANTHER" id="PTHR11138:SF5">
    <property type="entry name" value="METHIONYL-TRNA FORMYLTRANSFERASE, MITOCHONDRIAL"/>
    <property type="match status" value="1"/>
</dbReference>
<dbReference type="Pfam" id="PF02911">
    <property type="entry name" value="Formyl_trans_C"/>
    <property type="match status" value="1"/>
</dbReference>
<dbReference type="Pfam" id="PF00551">
    <property type="entry name" value="Formyl_trans_N"/>
    <property type="match status" value="1"/>
</dbReference>
<dbReference type="SUPFAM" id="SSF50486">
    <property type="entry name" value="FMT C-terminal domain-like"/>
    <property type="match status" value="1"/>
</dbReference>
<dbReference type="SUPFAM" id="SSF53328">
    <property type="entry name" value="Formyltransferase"/>
    <property type="match status" value="1"/>
</dbReference>
<dbReference type="PROSITE" id="PS00373">
    <property type="entry name" value="GART"/>
    <property type="match status" value="1"/>
</dbReference>